<comment type="function">
    <text>Electron carrier protein. The oxidized form of the cytochrome c heme group can accept an electron from the heme group of the cytochrome c1 subunit of cytochrome reductase. Cytochrome c then transfers this electron to the cytochrome oxidase complex, the final protein carrier in the mitochondrial electron-transport chain.</text>
</comment>
<comment type="function">
    <text evidence="1">Plays a role in apoptosis. Suppression of the anti-apoptotic members or activation of the pro-apoptotic members of the Bcl-2 family leads to altered mitochondrial membrane permeability resulting in release of cytochrome c into the cytosol. Binding of cytochrome c to Apaf-1 triggers the activation of caspase-9, which then accelerates apoptosis by activating other caspases (By similarity).</text>
</comment>
<comment type="subcellular location">
    <subcellularLocation>
        <location>Mitochondrion intermembrane space</location>
    </subcellularLocation>
    <text>Loosely associated with the inner membrane.</text>
</comment>
<comment type="PTM">
    <text>Binds 1 heme c group covalently per subunit.</text>
</comment>
<comment type="PTM">
    <text evidence="1">Phosphorylation at Tyr-49 and Tyr-98 both reduce by half the turnover in the reaction with cytochrome c oxidase, down-regulating mitochondrial respiration.</text>
</comment>
<comment type="similarity">
    <text evidence="5">Belongs to the cytochrome c family.</text>
</comment>
<comment type="online information" name="Protein Spotlight">
    <link uri="https://www.proteinspotlight.org/back_issues/076"/>
    <text>Life shuttle - Issue 76 of November 2006</text>
</comment>
<evidence type="ECO:0000250" key="1"/>
<evidence type="ECO:0000250" key="2">
    <source>
        <dbReference type="UniProtKB" id="P62894"/>
    </source>
</evidence>
<evidence type="ECO:0000250" key="3">
    <source>
        <dbReference type="UniProtKB" id="P62897"/>
    </source>
</evidence>
<evidence type="ECO:0000255" key="4">
    <source>
        <dbReference type="PROSITE-ProRule" id="PRU00433"/>
    </source>
</evidence>
<evidence type="ECO:0000305" key="5"/>
<protein>
    <recommendedName>
        <fullName>Cytochrome c</fullName>
    </recommendedName>
</protein>
<accession>P62896</accession>
<accession>P00006</accession>
<name>CYC_SHEEP</name>
<keyword id="KW-0007">Acetylation</keyword>
<keyword id="KW-0053">Apoptosis</keyword>
<keyword id="KW-0249">Electron transport</keyword>
<keyword id="KW-0349">Heme</keyword>
<keyword id="KW-0408">Iron</keyword>
<keyword id="KW-0479">Metal-binding</keyword>
<keyword id="KW-0496">Mitochondrion</keyword>
<keyword id="KW-0597">Phosphoprotein</keyword>
<keyword id="KW-1185">Reference proteome</keyword>
<keyword id="KW-0679">Respiratory chain</keyword>
<keyword id="KW-0813">Transport</keyword>
<reference key="1">
    <citation type="journal article" date="1964" name="Fed. Proc.">
        <title>Evolution of cytochrome c.</title>
        <authorList>
            <person name="Smith E.L."/>
            <person name="Margoliash E."/>
        </authorList>
    </citation>
    <scope>AMINO-ACID COMPOSITION</scope>
    <scope>MOBILITIES OF TRYPTIC AND CHYMOTRYPTIC PEPTIDES</scope>
</reference>
<proteinExistence type="evidence at protein level"/>
<feature type="initiator methionine" description="Removed" evidence="2">
    <location>
        <position position="1"/>
    </location>
</feature>
<feature type="chain" id="PRO_0000108234" description="Cytochrome c">
    <location>
        <begin position="2"/>
        <end position="105"/>
    </location>
</feature>
<feature type="binding site" description="covalent" evidence="4">
    <location>
        <position position="15"/>
    </location>
    <ligand>
        <name>heme c</name>
        <dbReference type="ChEBI" id="CHEBI:61717"/>
    </ligand>
</feature>
<feature type="binding site" description="covalent" evidence="4">
    <location>
        <position position="18"/>
    </location>
    <ligand>
        <name>heme c</name>
        <dbReference type="ChEBI" id="CHEBI:61717"/>
    </ligand>
</feature>
<feature type="binding site" description="axial binding residue" evidence="4">
    <location>
        <position position="19"/>
    </location>
    <ligand>
        <name>heme c</name>
        <dbReference type="ChEBI" id="CHEBI:61717"/>
    </ligand>
    <ligandPart>
        <name>Fe</name>
        <dbReference type="ChEBI" id="CHEBI:18248"/>
    </ligandPart>
</feature>
<feature type="binding site" description="axial binding residue" evidence="4">
    <location>
        <position position="81"/>
    </location>
    <ligand>
        <name>heme c</name>
        <dbReference type="ChEBI" id="CHEBI:61717"/>
    </ligand>
    <ligandPart>
        <name>Fe</name>
        <dbReference type="ChEBI" id="CHEBI:18248"/>
    </ligandPart>
</feature>
<feature type="modified residue" description="N-acetylglycine" evidence="2">
    <location>
        <position position="2"/>
    </location>
</feature>
<feature type="modified residue" description="Phosphotyrosine" evidence="2">
    <location>
        <position position="49"/>
    </location>
</feature>
<feature type="modified residue" description="N6-succinyllysine" evidence="3">
    <location>
        <position position="56"/>
    </location>
</feature>
<feature type="modified residue" description="N6-acetyllysine; alternate" evidence="3">
    <location>
        <position position="73"/>
    </location>
</feature>
<feature type="modified residue" description="N6-succinyllysine; alternate" evidence="3">
    <location>
        <position position="73"/>
    </location>
</feature>
<feature type="modified residue" description="Phosphotyrosine" evidence="2">
    <location>
        <position position="98"/>
    </location>
</feature>
<feature type="modified residue" description="N6-acetyllysine" evidence="3">
    <location>
        <position position="100"/>
    </location>
</feature>
<dbReference type="PIR" id="A91454">
    <property type="entry name" value="CCSH"/>
</dbReference>
<dbReference type="BMRB" id="P62896"/>
<dbReference type="SMR" id="P62896"/>
<dbReference type="STRING" id="9940.ENSOARP00000022795"/>
<dbReference type="PaxDb" id="9940-ENSOARP00000022795"/>
<dbReference type="Ensembl" id="ENSOART00025001087">
    <property type="protein sequence ID" value="ENSOARP00025000540"/>
    <property type="gene ID" value="ENSOARG00025000665"/>
</dbReference>
<dbReference type="Ensembl" id="ENSOART00025008564">
    <property type="protein sequence ID" value="ENSOARP00025004397"/>
    <property type="gene ID" value="ENSOARG00025005140"/>
</dbReference>
<dbReference type="Ensembl" id="ENSOART00040035210">
    <property type="protein sequence ID" value="ENSOARP00040018282"/>
    <property type="gene ID" value="ENSOARG00040021104"/>
</dbReference>
<dbReference type="Ensembl" id="ENSOART00180002060">
    <property type="protein sequence ID" value="ENSOARP00180001015"/>
    <property type="gene ID" value="ENSOARG00180001326"/>
</dbReference>
<dbReference type="Ensembl" id="ENSOART00180014185">
    <property type="protein sequence ID" value="ENSOARP00180007540"/>
    <property type="gene ID" value="ENSOARG00180008557"/>
</dbReference>
<dbReference type="Ensembl" id="ENSOART00180016722">
    <property type="protein sequence ID" value="ENSOARP00180008453"/>
    <property type="gene ID" value="ENSOARG00180010212"/>
</dbReference>
<dbReference type="Ensembl" id="ENSOART00180023204">
    <property type="protein sequence ID" value="ENSOARP00180011901"/>
    <property type="gene ID" value="ENSOARG00180014144"/>
</dbReference>
<dbReference type="Ensembl" id="ENSOART00180059192">
    <property type="protein sequence ID" value="ENSOARP00180031856"/>
    <property type="gene ID" value="ENSOARG00180035118"/>
</dbReference>
<dbReference type="Ensembl" id="ENSOART00185017947">
    <property type="protein sequence ID" value="ENSOARP00185008893"/>
    <property type="gene ID" value="ENSOARG00185011048"/>
</dbReference>
<dbReference type="Ensembl" id="ENSOART00185034106">
    <property type="protein sequence ID" value="ENSOARP00185016769"/>
    <property type="gene ID" value="ENSOARG00185020777"/>
</dbReference>
<dbReference type="Ensembl" id="ENSOART00185034123">
    <property type="protein sequence ID" value="ENSOARP00185016781"/>
    <property type="gene ID" value="ENSOARG00185020777"/>
</dbReference>
<dbReference type="Ensembl" id="ENSOART00185037096">
    <property type="protein sequence ID" value="ENSOARP00185018352"/>
    <property type="gene ID" value="ENSOARG00185022563"/>
</dbReference>
<dbReference type="Ensembl" id="ENSOART00215006679">
    <property type="protein sequence ID" value="ENSOARP00215003719"/>
    <property type="gene ID" value="ENSOARG00215003956"/>
</dbReference>
<dbReference type="Ensembl" id="ENSOART00215023636">
    <property type="protein sequence ID" value="ENSOARP00215011994"/>
    <property type="gene ID" value="ENSOARG00215014255"/>
</dbReference>
<dbReference type="Ensembl" id="ENSOART00215030911">
    <property type="protein sequence ID" value="ENSOARP00215016312"/>
    <property type="gene ID" value="ENSOARG00215018422"/>
</dbReference>
<dbReference type="Ensembl" id="ENSOART00215041669">
    <property type="protein sequence ID" value="ENSOARP00215021445"/>
    <property type="gene ID" value="ENSOARG00215025082"/>
</dbReference>
<dbReference type="Ensembl" id="ENSOART00215063004">
    <property type="protein sequence ID" value="ENSOARP00215033505"/>
    <property type="gene ID" value="ENSOARG00215037445"/>
</dbReference>
<dbReference type="Ensembl" id="ENSOART00220004451">
    <property type="protein sequence ID" value="ENSOARP00220003051"/>
    <property type="gene ID" value="ENSOARG00220002431"/>
</dbReference>
<dbReference type="Ensembl" id="ENSOART00220045833">
    <property type="protein sequence ID" value="ENSOARP00220024971"/>
    <property type="gene ID" value="ENSOARG00220027432"/>
</dbReference>
<dbReference type="Ensembl" id="ENSOART00220049414">
    <property type="protein sequence ID" value="ENSOARP00220026517"/>
    <property type="gene ID" value="ENSOARG00220029655"/>
</dbReference>
<dbReference type="Ensembl" id="ENSOART00220059949">
    <property type="protein sequence ID" value="ENSOARP00220032098"/>
    <property type="gene ID" value="ENSOARG00220036227"/>
</dbReference>
<dbReference type="Ensembl" id="ENSOART00220073388">
    <property type="protein sequence ID" value="ENSOARP00220039406"/>
    <property type="gene ID" value="ENSOARG00220044222"/>
</dbReference>
<dbReference type="Ensembl" id="ENSOART00225006856">
    <property type="protein sequence ID" value="ENSOARP00225003036"/>
    <property type="gene ID" value="ENSOARG00225004273"/>
</dbReference>
<dbReference type="Ensembl" id="ENSOART00225016327">
    <property type="protein sequence ID" value="ENSOARP00225008023"/>
    <property type="gene ID" value="ENSOARG00225009885"/>
</dbReference>
<dbReference type="Ensembl" id="ENSOART00225036328">
    <property type="protein sequence ID" value="ENSOARP00225017785"/>
    <property type="gene ID" value="ENSOARG00225022091"/>
</dbReference>
<dbReference type="Ensembl" id="ENSOART00225046013">
    <property type="protein sequence ID" value="ENSOARP00225022776"/>
    <property type="gene ID" value="ENSOARG00225027968"/>
</dbReference>
<dbReference type="Ensembl" id="ENSOART00225056735">
    <property type="protein sequence ID" value="ENSOARP00225028412"/>
    <property type="gene ID" value="ENSOARG00225034335"/>
</dbReference>
<dbReference type="Ensembl" id="ENSOART00260007203">
    <property type="protein sequence ID" value="ENSOARP00260003736"/>
    <property type="gene ID" value="ENSOARG00260004378"/>
</dbReference>
<dbReference type="Ensembl" id="ENSOART00260045656">
    <property type="protein sequence ID" value="ENSOARP00260023320"/>
    <property type="gene ID" value="ENSOARG00260027759"/>
</dbReference>
<dbReference type="KEGG" id="oas:106990092"/>
<dbReference type="eggNOG" id="KOG3453">
    <property type="taxonomic scope" value="Eukaryota"/>
</dbReference>
<dbReference type="HOGENOM" id="CLU_060944_3_0_1"/>
<dbReference type="OMA" id="KARCAQC"/>
<dbReference type="OrthoDB" id="449280at2759"/>
<dbReference type="Proteomes" id="UP000002356">
    <property type="component" value="Chromosome 4"/>
</dbReference>
<dbReference type="Bgee" id="ENSOARG00000025169">
    <property type="expression patterns" value="Expressed in longissimus thoracis muscle and 56 other cell types or tissues"/>
</dbReference>
<dbReference type="GO" id="GO:0005758">
    <property type="term" value="C:mitochondrial intermembrane space"/>
    <property type="evidence" value="ECO:0007669"/>
    <property type="project" value="UniProtKB-SubCell"/>
</dbReference>
<dbReference type="GO" id="GO:0009055">
    <property type="term" value="F:electron transfer activity"/>
    <property type="evidence" value="ECO:0007669"/>
    <property type="project" value="InterPro"/>
</dbReference>
<dbReference type="GO" id="GO:0020037">
    <property type="term" value="F:heme binding"/>
    <property type="evidence" value="ECO:0007669"/>
    <property type="project" value="InterPro"/>
</dbReference>
<dbReference type="GO" id="GO:0046872">
    <property type="term" value="F:metal ion binding"/>
    <property type="evidence" value="ECO:0007669"/>
    <property type="project" value="UniProtKB-KW"/>
</dbReference>
<dbReference type="GO" id="GO:0006915">
    <property type="term" value="P:apoptotic process"/>
    <property type="evidence" value="ECO:0007669"/>
    <property type="project" value="UniProtKB-KW"/>
</dbReference>
<dbReference type="FunFam" id="1.10.760.10:FF:000008">
    <property type="entry name" value="Cytochrome c"/>
    <property type="match status" value="1"/>
</dbReference>
<dbReference type="Gene3D" id="1.10.760.10">
    <property type="entry name" value="Cytochrome c-like domain"/>
    <property type="match status" value="1"/>
</dbReference>
<dbReference type="InterPro" id="IPR009056">
    <property type="entry name" value="Cyt_c-like_dom"/>
</dbReference>
<dbReference type="InterPro" id="IPR036909">
    <property type="entry name" value="Cyt_c-like_dom_sf"/>
</dbReference>
<dbReference type="InterPro" id="IPR002327">
    <property type="entry name" value="Cyt_c_1A/1B"/>
</dbReference>
<dbReference type="PANTHER" id="PTHR11961">
    <property type="entry name" value="CYTOCHROME C"/>
    <property type="match status" value="1"/>
</dbReference>
<dbReference type="Pfam" id="PF00034">
    <property type="entry name" value="Cytochrom_C"/>
    <property type="match status" value="1"/>
</dbReference>
<dbReference type="PRINTS" id="PR00604">
    <property type="entry name" value="CYTCHRMECIAB"/>
</dbReference>
<dbReference type="SUPFAM" id="SSF46626">
    <property type="entry name" value="Cytochrome c"/>
    <property type="match status" value="1"/>
</dbReference>
<dbReference type="PROSITE" id="PS51007">
    <property type="entry name" value="CYTC"/>
    <property type="match status" value="1"/>
</dbReference>
<sequence>MGDVEKGKKIFVQKCAQCHTVEKGGKHKTGPNLHGLFGRKTGQAPGFSYTDANKNKGITWGEETLMEYLENPKKYIPGTKMIFAGIKKKGEREDLIAYLKKATNE</sequence>
<gene>
    <name type="primary">CYCS</name>
    <name type="synonym">CYC</name>
</gene>
<organism>
    <name type="scientific">Ovis aries</name>
    <name type="common">Sheep</name>
    <dbReference type="NCBI Taxonomy" id="9940"/>
    <lineage>
        <taxon>Eukaryota</taxon>
        <taxon>Metazoa</taxon>
        <taxon>Chordata</taxon>
        <taxon>Craniata</taxon>
        <taxon>Vertebrata</taxon>
        <taxon>Euteleostomi</taxon>
        <taxon>Mammalia</taxon>
        <taxon>Eutheria</taxon>
        <taxon>Laurasiatheria</taxon>
        <taxon>Artiodactyla</taxon>
        <taxon>Ruminantia</taxon>
        <taxon>Pecora</taxon>
        <taxon>Bovidae</taxon>
        <taxon>Caprinae</taxon>
        <taxon>Ovis</taxon>
    </lineage>
</organism>